<keyword id="KW-0274">FAD</keyword>
<keyword id="KW-0285">Flavoprotein</keyword>
<keyword id="KW-0560">Oxidoreductase</keyword>
<evidence type="ECO:0000255" key="1">
    <source>
        <dbReference type="PROSITE-ProRule" id="PRU00718"/>
    </source>
</evidence>
<evidence type="ECO:0000269" key="2">
    <source>
    </source>
</evidence>
<evidence type="ECO:0000303" key="3">
    <source>
    </source>
</evidence>
<evidence type="ECO:0000305" key="4"/>
<proteinExistence type="inferred from homology"/>
<accession>A0A140JWT7</accession>
<organism>
    <name type="scientific">Penicillium ochrochloron</name>
    <dbReference type="NCBI Taxonomy" id="69780"/>
    <lineage>
        <taxon>Eukaryota</taxon>
        <taxon>Fungi</taxon>
        <taxon>Dikarya</taxon>
        <taxon>Ascomycota</taxon>
        <taxon>Pezizomycotina</taxon>
        <taxon>Eurotiomycetes</taxon>
        <taxon>Eurotiomycetidae</taxon>
        <taxon>Eurotiales</taxon>
        <taxon>Aspergillaceae</taxon>
        <taxon>Penicillium</taxon>
    </lineage>
</organism>
<protein>
    <recommendedName>
        <fullName evidence="3">FAD-linked oxidoreductase ptmO</fullName>
        <ecNumber evidence="2">1.1.1.-</ecNumber>
    </recommendedName>
    <alternativeName>
        <fullName evidence="3">Penitrem biosynthesis cluster 2 protein O</fullName>
    </alternativeName>
</protein>
<feature type="chain" id="PRO_0000446570" description="FAD-linked oxidoreductase ptmO">
    <location>
        <begin position="1"/>
        <end position="450"/>
    </location>
</feature>
<feature type="domain" description="FAD-binding PCMH-type" evidence="1">
    <location>
        <begin position="32"/>
        <end position="203"/>
    </location>
</feature>
<sequence>MKHNLPADLVTLWRDSPGYESARSRTFNQRIPPELPYAIVRPKNMEQIQHAVQLAVDLDKQIRIRSGGHSLAGWTLCADSILIDLVDFRHLEYDATTAIASASPSATSAQLNDLLVPHGRFVPVGHCGDVGLGGFFLQGGMGLNCRSYGWACEYLVGVDLITADGEYKHCSESENADLFWAARGAGPEFPAIVTRFFIRTRPAAAKYEKSTFIWPVACSDAVVSWILKILPELHADIEPLVVSTIVPGLNVAAILVQFLVFLSTNETGAEKLGPSLTAMPDGTLMEFKGVPTSIQQEYVSQEGTMPRDSRYICDSVWFKDGIDFVTVTRRMFREFPRDRSMVYWEPKYPTSRRQLPDMAFSLQADQYLALFAIFEDSQQDEEQGIRIQEFIQEIEPYVLGTFAADGMPAVRKTQYWSAEVIERLYSVCQKWDPAHRLGCTLLDPTRKVKS</sequence>
<gene>
    <name evidence="3" type="primary">ptmO</name>
</gene>
<name>PTMO_PENOH</name>
<reference key="1">
    <citation type="journal article" date="2015" name="Angew. Chem. Int. Ed.">
        <title>Reconstitution of biosynthetic machinery for the synthesis of the highly elaborated indole diterpene penitrem.</title>
        <authorList>
            <person name="Liu C."/>
            <person name="Tagami K."/>
            <person name="Minami A."/>
            <person name="Matsumoto T."/>
            <person name="Frisvad J.C."/>
            <person name="Suzuki H."/>
            <person name="Ishikawa J."/>
            <person name="Gomi K."/>
            <person name="Oikawa H."/>
        </authorList>
    </citation>
    <scope>NUCLEOTIDE SEQUENCE [GENOMIC DNA]</scope>
    <scope>IDENTIFICATION</scope>
    <scope>FUNCTION</scope>
    <scope>PATHWAY</scope>
    <source>
        <strain>ATCC 90288 / AK-40</strain>
    </source>
</reference>
<comment type="function">
    <text evidence="2">FAD-linked oxidoreductase; part of the gene cluster that mediates the biosynthesis of the indole diterpenes penitrems (PubMed:25831977). The geranylgeranyl diphosphate (GGPP) synthase ptmG catalyzes the first step in penitrem biosynthesis via conversion of farnesyl pyrophosphate and isopentyl pyrophosphate into geranylgeranyl pyrophosphate (GGPP) (PubMed:25831977). Condensation of indole-3-glycerol phosphate with GGPP by the prenyl transferase ptmC then forms 3-geranylgeranylindole (3-GGI) (PubMed:25831977). Epoxidation by the FAD-dependent monooxygenase ptmM leads to a epoxidized-GGI that is substrate of the terpene cyclase ptmB for cyclization to yield paspaline (PubMed:25831977). Paspaline is subsequently converted to 13-desoxypaxilline by the cytochrome P450 monooxygenase ptmP, the latter being then converted to paxilline by the cytochrome P450 monooxygenase ptmQ (PubMed:25831977). Paxilline is converted to beta-paxitriol via C-10 ketoreduction by the short-chain dehydrogenase ptmH which can be monoprenylated at the C-20 by the indole diterpene prenyltransferase ptmD (PubMed:25831977). A two-step elimination (acetylation and elimination) process performed by the O-acetyltransferase ptmV and ptmI leads to the production of the prenylated form of penijanthine (PubMed:25831977). The FAD-linked oxidoreductase ptmO then converts the prenylated form of penijanthine into PC-M5 which is in turn transformed into PC-M4 by the aromatic dimethylallyltransferase ptmE (PubMed:25831977). Five sequential oxidative transformations performed by the cytochrome P450 monooxygenases ptmK, ptmU, ptmL, ptmN and ptmJ yield the various penitrem compounds. PtmK, ptmU and ptmM are involved in the formation of the key bicyclic ring of penitrem C via the formation of the intermediates secopenitrem D and penitrem D. PtmL catalyzes the epoxidation of penitrem D and C to yield penitrem B and F, respectively. PtmJ catalyzes the last benzylic hydroxylation to convert penitrem B to prenitrem E and penitrem F to penitrem A (PubMed:25831977).</text>
</comment>
<comment type="cofactor">
    <cofactor evidence="4">
        <name>FAD</name>
        <dbReference type="ChEBI" id="CHEBI:57692"/>
    </cofactor>
</comment>
<comment type="pathway">
    <text evidence="2">Secondary metabolite biosynthesis.</text>
</comment>
<comment type="similarity">
    <text evidence="4">Belongs to the oxygen-dependent FAD-linked oxidoreductase family.</text>
</comment>
<dbReference type="EC" id="1.1.1.-" evidence="2"/>
<dbReference type="EMBL" id="LC027937">
    <property type="protein sequence ID" value="BAU61564.1"/>
    <property type="molecule type" value="Genomic_DNA"/>
</dbReference>
<dbReference type="SMR" id="A0A140JWT7"/>
<dbReference type="GO" id="GO:0071949">
    <property type="term" value="F:FAD binding"/>
    <property type="evidence" value="ECO:0007669"/>
    <property type="project" value="InterPro"/>
</dbReference>
<dbReference type="GO" id="GO:0016491">
    <property type="term" value="F:oxidoreductase activity"/>
    <property type="evidence" value="ECO:0007669"/>
    <property type="project" value="UniProtKB-KW"/>
</dbReference>
<dbReference type="Gene3D" id="3.30.465.10">
    <property type="match status" value="1"/>
</dbReference>
<dbReference type="Gene3D" id="3.40.462.20">
    <property type="match status" value="1"/>
</dbReference>
<dbReference type="Gene3D" id="3.30.43.10">
    <property type="entry name" value="Uridine Diphospho-n-acetylenolpyruvylglucosamine Reductase, domain 2"/>
    <property type="match status" value="1"/>
</dbReference>
<dbReference type="InterPro" id="IPR016166">
    <property type="entry name" value="FAD-bd_PCMH"/>
</dbReference>
<dbReference type="InterPro" id="IPR036318">
    <property type="entry name" value="FAD-bd_PCMH-like_sf"/>
</dbReference>
<dbReference type="InterPro" id="IPR016167">
    <property type="entry name" value="FAD-bd_PCMH_sub1"/>
</dbReference>
<dbReference type="InterPro" id="IPR016169">
    <property type="entry name" value="FAD-bd_PCMH_sub2"/>
</dbReference>
<dbReference type="InterPro" id="IPR050416">
    <property type="entry name" value="FAD-linked_Oxidoreductase"/>
</dbReference>
<dbReference type="InterPro" id="IPR006094">
    <property type="entry name" value="Oxid_FAD_bind_N"/>
</dbReference>
<dbReference type="PANTHER" id="PTHR42973">
    <property type="entry name" value="BINDING OXIDOREDUCTASE, PUTATIVE (AFU_ORTHOLOGUE AFUA_1G17690)-RELATED"/>
    <property type="match status" value="1"/>
</dbReference>
<dbReference type="PANTHER" id="PTHR42973:SF39">
    <property type="entry name" value="FAD-BINDING PCMH-TYPE DOMAIN-CONTAINING PROTEIN"/>
    <property type="match status" value="1"/>
</dbReference>
<dbReference type="Pfam" id="PF01565">
    <property type="entry name" value="FAD_binding_4"/>
    <property type="match status" value="1"/>
</dbReference>
<dbReference type="SUPFAM" id="SSF56176">
    <property type="entry name" value="FAD-binding/transporter-associated domain-like"/>
    <property type="match status" value="1"/>
</dbReference>
<dbReference type="PROSITE" id="PS51387">
    <property type="entry name" value="FAD_PCMH"/>
    <property type="match status" value="1"/>
</dbReference>